<reference key="1">
    <citation type="journal article" date="1985" name="Gene">
        <title>Molecular characterization and genetic mapping of two clusters of genes encoding chlorophyll a/b-binding proteins in Lycopersicon esculentum (tomato).</title>
        <authorList>
            <person name="Pichersky E."/>
            <person name="Bernatzky R."/>
            <person name="Tanksley S.D."/>
            <person name="Breidenbach R.B."/>
            <person name="Kausch A.P."/>
            <person name="Cashmore A.R."/>
        </authorList>
    </citation>
    <scope>NUCLEOTIDE SEQUENCE [GENOMIC DNA]</scope>
    <source>
        <strain>cv. T6</strain>
    </source>
</reference>
<feature type="transit peptide" description="Chloroplast">
    <location>
        <begin position="1"/>
        <end position="35"/>
    </location>
</feature>
<feature type="chain" id="PRO_0000003667" description="Chlorophyll a-b binding protein 3C, chloroplastic">
    <location>
        <begin position="36"/>
        <end position="267"/>
    </location>
</feature>
<feature type="transmembrane region" description="Helical" evidence="4">
    <location>
        <begin position="101"/>
        <end position="121"/>
    </location>
</feature>
<feature type="transmembrane region" description="Helical" evidence="4">
    <location>
        <begin position="153"/>
        <end position="173"/>
    </location>
</feature>
<feature type="transmembrane region" description="Helical" evidence="4">
    <location>
        <begin position="221"/>
        <end position="241"/>
    </location>
</feature>
<feature type="binding site" description="axial binding residue" evidence="3">
    <location>
        <position position="59"/>
    </location>
    <ligand>
        <name>chlorophyll b</name>
        <dbReference type="ChEBI" id="CHEBI:61721"/>
        <label>1</label>
    </ligand>
    <ligandPart>
        <name>Mg</name>
        <dbReference type="ChEBI" id="CHEBI:25107"/>
    </ligandPart>
</feature>
<feature type="binding site" evidence="1">
    <location>
        <position position="81"/>
    </location>
    <ligand>
        <name>chlorophyll a</name>
        <dbReference type="ChEBI" id="CHEBI:58416"/>
        <label>1</label>
    </ligand>
</feature>
<feature type="binding site" evidence="1">
    <location>
        <position position="87"/>
    </location>
    <ligand>
        <name>chlorophyll a</name>
        <dbReference type="ChEBI" id="CHEBI:58416"/>
        <label>1</label>
    </ligand>
</feature>
<feature type="binding site" description="axial binding residue" evidence="2">
    <location>
        <position position="100"/>
    </location>
    <ligand>
        <name>chlorophyll a</name>
        <dbReference type="ChEBI" id="CHEBI:58416"/>
        <label>1</label>
    </ligand>
    <ligandPart>
        <name>Mg</name>
        <dbReference type="ChEBI" id="CHEBI:25107"/>
    </ligandPart>
</feature>
<feature type="binding site" description="axial binding residue" evidence="2">
    <location>
        <position position="103"/>
    </location>
    <ligand>
        <name>chlorophyll a</name>
        <dbReference type="ChEBI" id="CHEBI:58416"/>
        <label>2</label>
    </ligand>
    <ligandPart>
        <name>Mg</name>
        <dbReference type="ChEBI" id="CHEBI:25107"/>
    </ligandPart>
</feature>
<feature type="binding site" evidence="1">
    <location>
        <position position="105"/>
    </location>
    <ligand>
        <name>chlorophyll b</name>
        <dbReference type="ChEBI" id="CHEBI:61721"/>
        <label>2</label>
    </ligand>
</feature>
<feature type="binding site" evidence="1">
    <location>
        <position position="138"/>
    </location>
    <ligand>
        <name>chlorophyll a</name>
        <dbReference type="ChEBI" id="CHEBI:58416"/>
        <label>3</label>
    </ligand>
</feature>
<feature type="binding site" evidence="1">
    <location>
        <position position="148"/>
    </location>
    <ligand>
        <name>chlorophyll a</name>
        <dbReference type="ChEBI" id="CHEBI:58416"/>
        <label>3</label>
    </ligand>
</feature>
<feature type="binding site" description="axial binding residue" evidence="2">
    <location>
        <position position="154"/>
    </location>
    <ligand>
        <name>chlorophyll b</name>
        <dbReference type="ChEBI" id="CHEBI:61721"/>
        <label>2</label>
    </ligand>
    <ligandPart>
        <name>Mg</name>
        <dbReference type="ChEBI" id="CHEBI:25107"/>
    </ligandPart>
</feature>
<feature type="binding site" evidence="1">
    <location>
        <position position="158"/>
    </location>
    <ligand>
        <name>chlorophyll b</name>
        <dbReference type="ChEBI" id="CHEBI:61721"/>
        <label>3</label>
    </ligand>
</feature>
<feature type="binding site" evidence="1">
    <location>
        <position position="166"/>
    </location>
    <ligand>
        <name>chlorophyll b</name>
        <dbReference type="ChEBI" id="CHEBI:61721"/>
        <label>4</label>
    </ligand>
</feature>
<feature type="binding site" evidence="2">
    <location>
        <position position="166"/>
    </location>
    <ligand>
        <name>chlorophyll b</name>
        <dbReference type="ChEBI" id="CHEBI:61721"/>
        <label>5</label>
    </ligand>
</feature>
<feature type="binding site" description="axial binding residue" evidence="2">
    <location>
        <position position="174"/>
    </location>
    <ligand>
        <name>chlorophyll b</name>
        <dbReference type="ChEBI" id="CHEBI:61721"/>
        <label>3</label>
    </ligand>
    <ligandPart>
        <name>Mg</name>
        <dbReference type="ChEBI" id="CHEBI:25107"/>
    </ligandPart>
</feature>
<feature type="binding site" evidence="1">
    <location>
        <position position="177"/>
    </location>
    <ligand>
        <name>chlorophyll b</name>
        <dbReference type="ChEBI" id="CHEBI:61721"/>
        <label>4</label>
    </ligand>
</feature>
<feature type="binding site" evidence="1">
    <location>
        <position position="183"/>
    </location>
    <ligand>
        <name>chlorophyll b</name>
        <dbReference type="ChEBI" id="CHEBI:61721"/>
        <label>2</label>
    </ligand>
</feature>
<feature type="binding site" evidence="1">
    <location>
        <position position="214"/>
    </location>
    <ligand>
        <name>chlorophyll a</name>
        <dbReference type="ChEBI" id="CHEBI:58416"/>
        <label>5</label>
    </ligand>
</feature>
<feature type="binding site" description="axial binding residue" evidence="2">
    <location>
        <position position="215"/>
    </location>
    <ligand>
        <name>chlorophyll a</name>
        <dbReference type="ChEBI" id="CHEBI:58416"/>
        <label>3</label>
    </ligand>
    <ligandPart>
        <name>Mg</name>
        <dbReference type="ChEBI" id="CHEBI:25107"/>
    </ligandPart>
</feature>
<feature type="binding site" description="axial binding residue" evidence="2">
    <location>
        <position position="218"/>
    </location>
    <ligand>
        <name>chlorophyll a</name>
        <dbReference type="ChEBI" id="CHEBI:58416"/>
        <label>4</label>
    </ligand>
    <ligandPart>
        <name>Mg</name>
        <dbReference type="ChEBI" id="CHEBI:25107"/>
    </ligandPart>
</feature>
<feature type="binding site" evidence="1">
    <location>
        <position position="220"/>
    </location>
    <ligand>
        <name>chlorophyll a</name>
        <dbReference type="ChEBI" id="CHEBI:58416"/>
        <label>1</label>
    </ligand>
</feature>
<feature type="binding site" description="axial binding residue" evidence="2">
    <location>
        <position position="232"/>
    </location>
    <ligand>
        <name>chlorophyll a</name>
        <dbReference type="ChEBI" id="CHEBI:58416"/>
        <label>5</label>
    </ligand>
    <ligandPart>
        <name>Mg</name>
        <dbReference type="ChEBI" id="CHEBI:25107"/>
    </ligandPart>
</feature>
<feature type="binding site" description="axial binding residue" evidence="2">
    <location>
        <position position="247"/>
    </location>
    <ligand>
        <name>chlorophyll a</name>
        <dbReference type="ChEBI" id="CHEBI:58416"/>
        <label>6</label>
    </ligand>
    <ligandPart>
        <name>Mg</name>
        <dbReference type="ChEBI" id="CHEBI:25107"/>
    </ligandPart>
</feature>
<feature type="binding site" evidence="1">
    <location>
        <position position="256"/>
    </location>
    <ligand>
        <name>chlorophyll a</name>
        <dbReference type="ChEBI" id="CHEBI:58416"/>
        <label>6</label>
    </ligand>
</feature>
<feature type="binding site" evidence="1">
    <location>
        <position position="263"/>
    </location>
    <ligand>
        <name>chlorophyll b</name>
        <dbReference type="ChEBI" id="CHEBI:61721"/>
        <label>5</label>
    </ligand>
</feature>
<feature type="modified residue" description="N2-acetylarginine" evidence="1">
    <location>
        <position position="36"/>
    </location>
</feature>
<feature type="modified residue" description="Phosphothreonine" evidence="1">
    <location>
        <position position="38"/>
    </location>
</feature>
<feature type="sequence conflict" description="In Ref. 1; AAA34148." evidence="5" ref="1">
    <original>L</original>
    <variation>P</variation>
    <location>
        <position position="201"/>
    </location>
</feature>
<dbReference type="EMBL" id="M14444">
    <property type="protein sequence ID" value="AAA34148.1"/>
    <property type="molecule type" value="Genomic_DNA"/>
</dbReference>
<dbReference type="PIR" id="G24039">
    <property type="entry name" value="CDTO3C"/>
</dbReference>
<dbReference type="RefSeq" id="NP_001316912.1">
    <property type="nucleotide sequence ID" value="NM_001329983.1"/>
</dbReference>
<dbReference type="SMR" id="P07369"/>
<dbReference type="FunCoup" id="P07369">
    <property type="interactions" value="1040"/>
</dbReference>
<dbReference type="STRING" id="4081.P07369"/>
<dbReference type="PaxDb" id="4081-Solyc03g005780.1.1"/>
<dbReference type="GeneID" id="108491835"/>
<dbReference type="KEGG" id="sly:108491835"/>
<dbReference type="eggNOG" id="ENOG502QPU1">
    <property type="taxonomic scope" value="Eukaryota"/>
</dbReference>
<dbReference type="HOGENOM" id="CLU_057943_2_0_1"/>
<dbReference type="InParanoid" id="P07369"/>
<dbReference type="OrthoDB" id="1858299at2759"/>
<dbReference type="PhylomeDB" id="P07369"/>
<dbReference type="Proteomes" id="UP000004994">
    <property type="component" value="Unplaced"/>
</dbReference>
<dbReference type="ExpressionAtlas" id="P07369">
    <property type="expression patterns" value="baseline and differential"/>
</dbReference>
<dbReference type="GO" id="GO:0009535">
    <property type="term" value="C:chloroplast thylakoid membrane"/>
    <property type="evidence" value="ECO:0000318"/>
    <property type="project" value="GO_Central"/>
</dbReference>
<dbReference type="GO" id="GO:0009522">
    <property type="term" value="C:photosystem I"/>
    <property type="evidence" value="ECO:0007669"/>
    <property type="project" value="UniProtKB-KW"/>
</dbReference>
<dbReference type="GO" id="GO:0009523">
    <property type="term" value="C:photosystem II"/>
    <property type="evidence" value="ECO:0007669"/>
    <property type="project" value="UniProtKB-KW"/>
</dbReference>
<dbReference type="GO" id="GO:0016168">
    <property type="term" value="F:chlorophyll binding"/>
    <property type="evidence" value="ECO:0007669"/>
    <property type="project" value="UniProtKB-KW"/>
</dbReference>
<dbReference type="GO" id="GO:0046872">
    <property type="term" value="F:metal ion binding"/>
    <property type="evidence" value="ECO:0007669"/>
    <property type="project" value="UniProtKB-KW"/>
</dbReference>
<dbReference type="GO" id="GO:0009768">
    <property type="term" value="P:photosynthesis, light harvesting in photosystem I"/>
    <property type="evidence" value="ECO:0000318"/>
    <property type="project" value="GO_Central"/>
</dbReference>
<dbReference type="GO" id="GO:0009416">
    <property type="term" value="P:response to light stimulus"/>
    <property type="evidence" value="ECO:0000318"/>
    <property type="project" value="GO_Central"/>
</dbReference>
<dbReference type="FunFam" id="1.10.3460.10:FF:000001">
    <property type="entry name" value="Chlorophyll a-b binding protein, chloroplastic"/>
    <property type="match status" value="1"/>
</dbReference>
<dbReference type="Gene3D" id="1.10.3460.10">
    <property type="entry name" value="Chlorophyll a/b binding protein domain"/>
    <property type="match status" value="1"/>
</dbReference>
<dbReference type="InterPro" id="IPR001344">
    <property type="entry name" value="Chloro_AB-bd_pln"/>
</dbReference>
<dbReference type="InterPro" id="IPR022796">
    <property type="entry name" value="Chloroa_b-bind"/>
</dbReference>
<dbReference type="PANTHER" id="PTHR21649">
    <property type="entry name" value="CHLOROPHYLL A/B BINDING PROTEIN"/>
    <property type="match status" value="1"/>
</dbReference>
<dbReference type="Pfam" id="PF00504">
    <property type="entry name" value="Chloroa_b-bind"/>
    <property type="match status" value="1"/>
</dbReference>
<dbReference type="SUPFAM" id="SSF103511">
    <property type="entry name" value="Chlorophyll a-b binding protein"/>
    <property type="match status" value="1"/>
</dbReference>
<proteinExistence type="inferred from homology"/>
<comment type="function">
    <text>The light-harvesting complex (LHC) functions as a light receptor, it captures and delivers excitation energy to photosystems with which it is closely associated.</text>
</comment>
<comment type="cofactor">
    <text evidence="1">Binds at least 14 chlorophylls (8 Chl-a and 6 Chl-b) and carotenoids such as lutein and neoxanthin.</text>
</comment>
<comment type="subunit">
    <text>The LHC complex consists of chlorophyll a-b binding proteins.</text>
</comment>
<comment type="subcellular location">
    <subcellularLocation>
        <location>Plastid</location>
        <location>Chloroplast thylakoid membrane</location>
        <topology>Multi-pass membrane protein</topology>
    </subcellularLocation>
</comment>
<comment type="domain">
    <text>The N-terminus of the protein extends into the stroma where it is involved with adhesion of granal membranes and post-translational modifications; both are believed to mediate the distribution of excitation energy between photosystems I and II.</text>
</comment>
<comment type="PTM">
    <text evidence="1">Photoregulated by reversible phosphorylation of its threonine residues.</text>
</comment>
<comment type="similarity">
    <text evidence="5">Belongs to the light-harvesting chlorophyll a/b-binding (LHC) protein family.</text>
</comment>
<name>CB2G_SOLLC</name>
<gene>
    <name type="primary">CAB3C</name>
</gene>
<evidence type="ECO:0000250" key="1"/>
<evidence type="ECO:0000250" key="2">
    <source>
        <dbReference type="UniProtKB" id="P07371"/>
    </source>
</evidence>
<evidence type="ECO:0000250" key="3">
    <source>
        <dbReference type="UniProtKB" id="P12333"/>
    </source>
</evidence>
<evidence type="ECO:0000255" key="4"/>
<evidence type="ECO:0000305" key="5"/>
<accession>P07369</accession>
<keyword id="KW-0007">Acetylation</keyword>
<keyword id="KW-0148">Chlorophyll</keyword>
<keyword id="KW-0150">Chloroplast</keyword>
<keyword id="KW-0157">Chromophore</keyword>
<keyword id="KW-0460">Magnesium</keyword>
<keyword id="KW-0472">Membrane</keyword>
<keyword id="KW-0479">Metal-binding</keyword>
<keyword id="KW-0597">Phosphoprotein</keyword>
<keyword id="KW-0602">Photosynthesis</keyword>
<keyword id="KW-0603">Photosystem I</keyword>
<keyword id="KW-0604">Photosystem II</keyword>
<keyword id="KW-0934">Plastid</keyword>
<keyword id="KW-1185">Reference proteome</keyword>
<keyword id="KW-0793">Thylakoid</keyword>
<keyword id="KW-0809">Transit peptide</keyword>
<keyword id="KW-0812">Transmembrane</keyword>
<keyword id="KW-1133">Transmembrane helix</keyword>
<organism>
    <name type="scientific">Solanum lycopersicum</name>
    <name type="common">Tomato</name>
    <name type="synonym">Lycopersicon esculentum</name>
    <dbReference type="NCBI Taxonomy" id="4081"/>
    <lineage>
        <taxon>Eukaryota</taxon>
        <taxon>Viridiplantae</taxon>
        <taxon>Streptophyta</taxon>
        <taxon>Embryophyta</taxon>
        <taxon>Tracheophyta</taxon>
        <taxon>Spermatophyta</taxon>
        <taxon>Magnoliopsida</taxon>
        <taxon>eudicotyledons</taxon>
        <taxon>Gunneridae</taxon>
        <taxon>Pentapetalae</taxon>
        <taxon>asterids</taxon>
        <taxon>lamiids</taxon>
        <taxon>Solanales</taxon>
        <taxon>Solanaceae</taxon>
        <taxon>Solanoideae</taxon>
        <taxon>Solaneae</taxon>
        <taxon>Solanum</taxon>
        <taxon>Solanum subgen. Lycopersicon</taxon>
    </lineage>
</organism>
<protein>
    <recommendedName>
        <fullName>Chlorophyll a-b binding protein 3C, chloroplastic</fullName>
    </recommendedName>
    <alternativeName>
        <fullName>LHCII type I CAB-3C</fullName>
        <shortName>LHCP</shortName>
    </alternativeName>
</protein>
<sequence length="267" mass="28325">MATSTMALSSSTFAGKAVKLSPSSSEITGNGRVTMRKTATKAKPASSGSPWYGPDRVKYLGPFSGESPSYLTGEFPGDYGWDTAGLSADPETFAKNRELEVIHCRWAMLGALGCVFPELLARNGVKFGEAVWFKAGSQIFSEGGLDYLGNPSLVHAQSILAIWACQVVLMGAVEGYRIAGGPLGEVVDPLYPGGSFDPLGLADDPEAFAELKVKEIKNGRLAMFSMFGFFVQAIVTGKGPLENLADHLADPVNNNAWAFATNFVPGK</sequence>